<dbReference type="EC" id="6.1.1.4" evidence="1"/>
<dbReference type="EMBL" id="CP000546">
    <property type="protein sequence ID" value="ABN02867.1"/>
    <property type="molecule type" value="Genomic_DNA"/>
</dbReference>
<dbReference type="RefSeq" id="WP_011832247.1">
    <property type="nucleotide sequence ID" value="NC_008836.1"/>
</dbReference>
<dbReference type="SMR" id="A2S5J4"/>
<dbReference type="KEGG" id="bml:BMA10229_A1229"/>
<dbReference type="HOGENOM" id="CLU_004427_0_0_4"/>
<dbReference type="Proteomes" id="UP000002283">
    <property type="component" value="Chromosome I"/>
</dbReference>
<dbReference type="GO" id="GO:0005829">
    <property type="term" value="C:cytosol"/>
    <property type="evidence" value="ECO:0007669"/>
    <property type="project" value="TreeGrafter"/>
</dbReference>
<dbReference type="GO" id="GO:0002161">
    <property type="term" value="F:aminoacyl-tRNA deacylase activity"/>
    <property type="evidence" value="ECO:0007669"/>
    <property type="project" value="InterPro"/>
</dbReference>
<dbReference type="GO" id="GO:0005524">
    <property type="term" value="F:ATP binding"/>
    <property type="evidence" value="ECO:0007669"/>
    <property type="project" value="UniProtKB-UniRule"/>
</dbReference>
<dbReference type="GO" id="GO:0004823">
    <property type="term" value="F:leucine-tRNA ligase activity"/>
    <property type="evidence" value="ECO:0007669"/>
    <property type="project" value="UniProtKB-UniRule"/>
</dbReference>
<dbReference type="GO" id="GO:0006429">
    <property type="term" value="P:leucyl-tRNA aminoacylation"/>
    <property type="evidence" value="ECO:0007669"/>
    <property type="project" value="UniProtKB-UniRule"/>
</dbReference>
<dbReference type="CDD" id="cd07958">
    <property type="entry name" value="Anticodon_Ia_Leu_BEm"/>
    <property type="match status" value="1"/>
</dbReference>
<dbReference type="CDD" id="cd00812">
    <property type="entry name" value="LeuRS_core"/>
    <property type="match status" value="1"/>
</dbReference>
<dbReference type="FunFam" id="1.10.730.10:FF:000002">
    <property type="entry name" value="Leucine--tRNA ligase"/>
    <property type="match status" value="1"/>
</dbReference>
<dbReference type="FunFam" id="2.20.28.290:FF:000001">
    <property type="entry name" value="Leucine--tRNA ligase"/>
    <property type="match status" value="1"/>
</dbReference>
<dbReference type="FunFam" id="3.40.50.620:FF:000003">
    <property type="entry name" value="Leucine--tRNA ligase"/>
    <property type="match status" value="1"/>
</dbReference>
<dbReference type="FunFam" id="3.40.50.620:FF:000056">
    <property type="entry name" value="Leucine--tRNA ligase"/>
    <property type="match status" value="1"/>
</dbReference>
<dbReference type="FunFam" id="3.90.740.10:FF:000012">
    <property type="entry name" value="Leucine--tRNA ligase"/>
    <property type="match status" value="1"/>
</dbReference>
<dbReference type="Gene3D" id="2.20.28.290">
    <property type="match status" value="1"/>
</dbReference>
<dbReference type="Gene3D" id="3.10.20.590">
    <property type="match status" value="1"/>
</dbReference>
<dbReference type="Gene3D" id="3.40.50.620">
    <property type="entry name" value="HUPs"/>
    <property type="match status" value="2"/>
</dbReference>
<dbReference type="Gene3D" id="1.10.730.10">
    <property type="entry name" value="Isoleucyl-tRNA Synthetase, Domain 1"/>
    <property type="match status" value="2"/>
</dbReference>
<dbReference type="Gene3D" id="3.90.740.10">
    <property type="entry name" value="Valyl/Leucyl/Isoleucyl-tRNA synthetase, editing domain"/>
    <property type="match status" value="1"/>
</dbReference>
<dbReference type="HAMAP" id="MF_00049_B">
    <property type="entry name" value="Leu_tRNA_synth_B"/>
    <property type="match status" value="1"/>
</dbReference>
<dbReference type="InterPro" id="IPR001412">
    <property type="entry name" value="aa-tRNA-synth_I_CS"/>
</dbReference>
<dbReference type="InterPro" id="IPR002300">
    <property type="entry name" value="aa-tRNA-synth_Ia"/>
</dbReference>
<dbReference type="InterPro" id="IPR002302">
    <property type="entry name" value="Leu-tRNA-ligase"/>
</dbReference>
<dbReference type="InterPro" id="IPR025709">
    <property type="entry name" value="Leu_tRNA-synth_edit"/>
</dbReference>
<dbReference type="InterPro" id="IPR013155">
    <property type="entry name" value="M/V/L/I-tRNA-synth_anticd-bd"/>
</dbReference>
<dbReference type="InterPro" id="IPR015413">
    <property type="entry name" value="Methionyl/Leucyl_tRNA_Synth"/>
</dbReference>
<dbReference type="InterPro" id="IPR014729">
    <property type="entry name" value="Rossmann-like_a/b/a_fold"/>
</dbReference>
<dbReference type="InterPro" id="IPR009080">
    <property type="entry name" value="tRNAsynth_Ia_anticodon-bd"/>
</dbReference>
<dbReference type="InterPro" id="IPR009008">
    <property type="entry name" value="Val/Leu/Ile-tRNA-synth_edit"/>
</dbReference>
<dbReference type="NCBIfam" id="TIGR00396">
    <property type="entry name" value="leuS_bact"/>
    <property type="match status" value="1"/>
</dbReference>
<dbReference type="PANTHER" id="PTHR43740:SF2">
    <property type="entry name" value="LEUCINE--TRNA LIGASE, MITOCHONDRIAL"/>
    <property type="match status" value="1"/>
</dbReference>
<dbReference type="PANTHER" id="PTHR43740">
    <property type="entry name" value="LEUCYL-TRNA SYNTHETASE"/>
    <property type="match status" value="1"/>
</dbReference>
<dbReference type="Pfam" id="PF08264">
    <property type="entry name" value="Anticodon_1"/>
    <property type="match status" value="1"/>
</dbReference>
<dbReference type="Pfam" id="PF00133">
    <property type="entry name" value="tRNA-synt_1"/>
    <property type="match status" value="2"/>
</dbReference>
<dbReference type="Pfam" id="PF13603">
    <property type="entry name" value="tRNA-synt_1_2"/>
    <property type="match status" value="1"/>
</dbReference>
<dbReference type="Pfam" id="PF09334">
    <property type="entry name" value="tRNA-synt_1g"/>
    <property type="match status" value="1"/>
</dbReference>
<dbReference type="PRINTS" id="PR00985">
    <property type="entry name" value="TRNASYNTHLEU"/>
</dbReference>
<dbReference type="SUPFAM" id="SSF47323">
    <property type="entry name" value="Anticodon-binding domain of a subclass of class I aminoacyl-tRNA synthetases"/>
    <property type="match status" value="1"/>
</dbReference>
<dbReference type="SUPFAM" id="SSF52374">
    <property type="entry name" value="Nucleotidylyl transferase"/>
    <property type="match status" value="1"/>
</dbReference>
<dbReference type="SUPFAM" id="SSF50677">
    <property type="entry name" value="ValRS/IleRS/LeuRS editing domain"/>
    <property type="match status" value="1"/>
</dbReference>
<dbReference type="PROSITE" id="PS00178">
    <property type="entry name" value="AA_TRNA_LIGASE_I"/>
    <property type="match status" value="1"/>
</dbReference>
<organism>
    <name type="scientific">Burkholderia mallei (strain NCTC 10229)</name>
    <dbReference type="NCBI Taxonomy" id="412022"/>
    <lineage>
        <taxon>Bacteria</taxon>
        <taxon>Pseudomonadati</taxon>
        <taxon>Pseudomonadota</taxon>
        <taxon>Betaproteobacteria</taxon>
        <taxon>Burkholderiales</taxon>
        <taxon>Burkholderiaceae</taxon>
        <taxon>Burkholderia</taxon>
        <taxon>pseudomallei group</taxon>
    </lineage>
</organism>
<keyword id="KW-0030">Aminoacyl-tRNA synthetase</keyword>
<keyword id="KW-0067">ATP-binding</keyword>
<keyword id="KW-0963">Cytoplasm</keyword>
<keyword id="KW-0436">Ligase</keyword>
<keyword id="KW-0547">Nucleotide-binding</keyword>
<keyword id="KW-0648">Protein biosynthesis</keyword>
<protein>
    <recommendedName>
        <fullName evidence="1">Leucine--tRNA ligase</fullName>
        <ecNumber evidence="1">6.1.1.4</ecNumber>
    </recommendedName>
    <alternativeName>
        <fullName evidence="1">Leucyl-tRNA synthetase</fullName>
        <shortName evidence="1">LeuRS</shortName>
    </alternativeName>
</protein>
<sequence>MHERYVPADVEAAAQSDWRAADAYRSKEDANRKKFYCVSMLPYPSGKLHMGHVRNYTINDVMYRYLRMNGYNTLMPMGWDAFGMPAENAAMANGVPPAQWTYENIAYMKKQMQAMGLAIDWSREVTTCKPDYYKWNQWLFLKMLEKGIAYKKTGTVNWDPVDQTVLANEQVIDGRGWRSGAFVEKREIPMYYMRITQYADELLNDLDGLGWPERVKVMQHNWIGKSFGVNFGFPYELDGEKKLLRVFTTRADTIMGVTFCAIAAEHPLAARLARDKPALQAFIDECKRGGVAEADIATMEKKGVATGFSVSHPLTGEPVEVWIGNYVLMSYGEGAVMGVPAHDERDFAFAKKYGLPIRQVIAVEGETYSTDAWQEWYGDKTRAVCVNSGKYDGLAYDAAVDAIAAELKAGGLGDKQITYRLRDWGISRQRYWGTPIPIIHCPSCGDVPVPEQDLPVVLPEDLVPDGTGNPLAKSDAFLNCTCPKCGAVAKRETDTMDTFVDSAWYFSRYAAPDAQTMVDARTDYWMPMDQYIGGIEHAILHLLYSRFWAKVMRDLGLVAFGEPAKNLLTQGMVLNETFYREDAAGKKTWYNPADVTVSFDDKGRPVGAVLKSDGQPVELGGIEKMSKSKNNGVDPQMLIDHYGADTARLFTMFAAPPEQQLEWSGAGVDGASRFLRRVWAFGFANREALAVRAPFDAAQLAEAGKTLRREIHGVLKQADFDYQRLQYNTVVSAAMKMLNAIEGAKGATPAVLRETYGVLLRVLYPVVPHVTFELWKVLGYADEFGPLLDAPWPKVDEAALEQAEIELVLQVNGKVRGALKVAKDASREAIEAAAVADGMFAKFAEGRPAKKIIVVPGRLVNVVV</sequence>
<accession>A2S5J4</accession>
<feature type="chain" id="PRO_1000009308" description="Leucine--tRNA ligase">
    <location>
        <begin position="1"/>
        <end position="864"/>
    </location>
</feature>
<feature type="short sequence motif" description="'HIGH' region">
    <location>
        <begin position="42"/>
        <end position="52"/>
    </location>
</feature>
<feature type="short sequence motif" description="'KMSKS' region">
    <location>
        <begin position="624"/>
        <end position="628"/>
    </location>
</feature>
<feature type="binding site" evidence="1">
    <location>
        <position position="627"/>
    </location>
    <ligand>
        <name>ATP</name>
        <dbReference type="ChEBI" id="CHEBI:30616"/>
    </ligand>
</feature>
<proteinExistence type="inferred from homology"/>
<comment type="catalytic activity">
    <reaction evidence="1">
        <text>tRNA(Leu) + L-leucine + ATP = L-leucyl-tRNA(Leu) + AMP + diphosphate</text>
        <dbReference type="Rhea" id="RHEA:11688"/>
        <dbReference type="Rhea" id="RHEA-COMP:9613"/>
        <dbReference type="Rhea" id="RHEA-COMP:9622"/>
        <dbReference type="ChEBI" id="CHEBI:30616"/>
        <dbReference type="ChEBI" id="CHEBI:33019"/>
        <dbReference type="ChEBI" id="CHEBI:57427"/>
        <dbReference type="ChEBI" id="CHEBI:78442"/>
        <dbReference type="ChEBI" id="CHEBI:78494"/>
        <dbReference type="ChEBI" id="CHEBI:456215"/>
        <dbReference type="EC" id="6.1.1.4"/>
    </reaction>
</comment>
<comment type="subcellular location">
    <subcellularLocation>
        <location evidence="1">Cytoplasm</location>
    </subcellularLocation>
</comment>
<comment type="similarity">
    <text evidence="1">Belongs to the class-I aminoacyl-tRNA synthetase family.</text>
</comment>
<name>SYL_BURM9</name>
<reference key="1">
    <citation type="journal article" date="2010" name="Genome Biol. Evol.">
        <title>Continuing evolution of Burkholderia mallei through genome reduction and large-scale rearrangements.</title>
        <authorList>
            <person name="Losada L."/>
            <person name="Ronning C.M."/>
            <person name="DeShazer D."/>
            <person name="Woods D."/>
            <person name="Fedorova N."/>
            <person name="Kim H.S."/>
            <person name="Shabalina S.A."/>
            <person name="Pearson T.R."/>
            <person name="Brinkac L."/>
            <person name="Tan P."/>
            <person name="Nandi T."/>
            <person name="Crabtree J."/>
            <person name="Badger J."/>
            <person name="Beckstrom-Sternberg S."/>
            <person name="Saqib M."/>
            <person name="Schutzer S.E."/>
            <person name="Keim P."/>
            <person name="Nierman W.C."/>
        </authorList>
    </citation>
    <scope>NUCLEOTIDE SEQUENCE [LARGE SCALE GENOMIC DNA]</scope>
    <source>
        <strain>NCTC 10229</strain>
    </source>
</reference>
<gene>
    <name evidence="1" type="primary">leuS</name>
    <name type="ordered locus">BMA10229_A1229</name>
</gene>
<evidence type="ECO:0000255" key="1">
    <source>
        <dbReference type="HAMAP-Rule" id="MF_00049"/>
    </source>
</evidence>